<reference key="1">
    <citation type="submission" date="2001-09" db="EMBL/GenBank/DDBJ databases">
        <title>Rab7 homologs in Arabidopsis thaliana.</title>
        <authorList>
            <person name="Ueda T."/>
            <person name="Wada Y."/>
            <person name="Nakano A."/>
        </authorList>
    </citation>
    <scope>NUCLEOTIDE SEQUENCE [MRNA]</scope>
</reference>
<reference key="2">
    <citation type="journal article" date="1997" name="FEBS Lett.">
        <title>Sequence analysis of a 24-kb contiguous genomic region at the Arabidopsis thaliana PFL locus on chromosome 1.</title>
        <authorList>
            <person name="Terryn N."/>
            <person name="Neyt P."/>
            <person name="de Clercq R."/>
            <person name="de Keyser A."/>
            <person name="van den Daele H."/>
            <person name="Ardiles W."/>
            <person name="Dehais P."/>
            <person name="Rouze P."/>
            <person name="Gielen J."/>
            <person name="Villarroel R."/>
            <person name="van Montagu M."/>
        </authorList>
    </citation>
    <scope>NUCLEOTIDE SEQUENCE [GENOMIC DNA / MRNA]</scope>
    <source>
        <strain>cv. Columbia</strain>
    </source>
</reference>
<reference key="3">
    <citation type="journal article" date="2000" name="Nature">
        <title>Sequence and analysis of chromosome 1 of the plant Arabidopsis thaliana.</title>
        <authorList>
            <person name="Theologis A."/>
            <person name="Ecker J.R."/>
            <person name="Palm C.J."/>
            <person name="Federspiel N.A."/>
            <person name="Kaul S."/>
            <person name="White O."/>
            <person name="Alonso J."/>
            <person name="Altafi H."/>
            <person name="Araujo R."/>
            <person name="Bowman C.L."/>
            <person name="Brooks S.Y."/>
            <person name="Buehler E."/>
            <person name="Chan A."/>
            <person name="Chao Q."/>
            <person name="Chen H."/>
            <person name="Cheuk R.F."/>
            <person name="Chin C.W."/>
            <person name="Chung M.K."/>
            <person name="Conn L."/>
            <person name="Conway A.B."/>
            <person name="Conway A.R."/>
            <person name="Creasy T.H."/>
            <person name="Dewar K."/>
            <person name="Dunn P."/>
            <person name="Etgu P."/>
            <person name="Feldblyum T.V."/>
            <person name="Feng J.-D."/>
            <person name="Fong B."/>
            <person name="Fujii C.Y."/>
            <person name="Gill J.E."/>
            <person name="Goldsmith A.D."/>
            <person name="Haas B."/>
            <person name="Hansen N.F."/>
            <person name="Hughes B."/>
            <person name="Huizar L."/>
            <person name="Hunter J.L."/>
            <person name="Jenkins J."/>
            <person name="Johnson-Hopson C."/>
            <person name="Khan S."/>
            <person name="Khaykin E."/>
            <person name="Kim C.J."/>
            <person name="Koo H.L."/>
            <person name="Kremenetskaia I."/>
            <person name="Kurtz D.B."/>
            <person name="Kwan A."/>
            <person name="Lam B."/>
            <person name="Langin-Hooper S."/>
            <person name="Lee A."/>
            <person name="Lee J.M."/>
            <person name="Lenz C.A."/>
            <person name="Li J.H."/>
            <person name="Li Y.-P."/>
            <person name="Lin X."/>
            <person name="Liu S.X."/>
            <person name="Liu Z.A."/>
            <person name="Luros J.S."/>
            <person name="Maiti R."/>
            <person name="Marziali A."/>
            <person name="Militscher J."/>
            <person name="Miranda M."/>
            <person name="Nguyen M."/>
            <person name="Nierman W.C."/>
            <person name="Osborne B.I."/>
            <person name="Pai G."/>
            <person name="Peterson J."/>
            <person name="Pham P.K."/>
            <person name="Rizzo M."/>
            <person name="Rooney T."/>
            <person name="Rowley D."/>
            <person name="Sakano H."/>
            <person name="Salzberg S.L."/>
            <person name="Schwartz J.R."/>
            <person name="Shinn P."/>
            <person name="Southwick A.M."/>
            <person name="Sun H."/>
            <person name="Tallon L.J."/>
            <person name="Tambunga G."/>
            <person name="Toriumi M.J."/>
            <person name="Town C.D."/>
            <person name="Utterback T."/>
            <person name="Van Aken S."/>
            <person name="Vaysberg M."/>
            <person name="Vysotskaia V.S."/>
            <person name="Walker M."/>
            <person name="Wu D."/>
            <person name="Yu G."/>
            <person name="Fraser C.M."/>
            <person name="Venter J.C."/>
            <person name="Davis R.W."/>
        </authorList>
    </citation>
    <scope>NUCLEOTIDE SEQUENCE [LARGE SCALE GENOMIC DNA]</scope>
    <source>
        <strain>cv. Columbia</strain>
    </source>
</reference>
<reference key="4">
    <citation type="journal article" date="2017" name="Plant J.">
        <title>Araport11: a complete reannotation of the Arabidopsis thaliana reference genome.</title>
        <authorList>
            <person name="Cheng C.Y."/>
            <person name="Krishnakumar V."/>
            <person name="Chan A.P."/>
            <person name="Thibaud-Nissen F."/>
            <person name="Schobel S."/>
            <person name="Town C.D."/>
        </authorList>
    </citation>
    <scope>GENOME REANNOTATION</scope>
    <source>
        <strain>cv. Columbia</strain>
    </source>
</reference>
<reference key="5">
    <citation type="submission" date="2006-02" db="EMBL/GenBank/DDBJ databases">
        <title>Arabidopsis ORF clones.</title>
        <authorList>
            <person name="Shinn P."/>
            <person name="Chen H."/>
            <person name="Kim C.J."/>
            <person name="Ecker J.R."/>
        </authorList>
    </citation>
    <scope>NUCLEOTIDE SEQUENCE [LARGE SCALE MRNA]</scope>
    <source>
        <strain>cv. Columbia</strain>
    </source>
</reference>
<reference key="6">
    <citation type="journal article" date="2003" name="Plant Physiol.">
        <title>Analysis of the small GTPase gene superfamily of Arabidopsis.</title>
        <authorList>
            <person name="Vernoud V."/>
            <person name="Horton A.C."/>
            <person name="Yang Z."/>
            <person name="Nielsen E."/>
        </authorList>
    </citation>
    <scope>GENE FAMILY</scope>
    <scope>NOMENCLATURE</scope>
</reference>
<reference key="7">
    <citation type="journal article" date="2010" name="Plant J.">
        <title>The Rab GTPase RabG3b functions in autophagy and contributes to tracheary element differentiation in Arabidopsis.</title>
        <authorList>
            <person name="Kwon S.I."/>
            <person name="Cho H.J."/>
            <person name="Jung J.H."/>
            <person name="Yoshimoto K."/>
            <person name="Shirasu K."/>
            <person name="Park O.K."/>
        </authorList>
    </citation>
    <scope>FUNCTION</scope>
    <scope>TISSUE SPECIFICITY</scope>
    <scope>MUTAGENESIS OF THR-22 AND GLN-67</scope>
</reference>
<reference key="8">
    <citation type="journal article" date="2018" name="Proc. Natl. Acad. Sci. U.S.A.">
        <title>Distinct sets of tethering complexes, SNARE complexes, and Rab GTPases mediate membrane fusion at the vacuole in Arabidopsis.</title>
        <authorList>
            <person name="Takemoto K."/>
            <person name="Ebine K."/>
            <person name="Askani J.C."/>
            <person name="Krueger F."/>
            <person name="Gonzalez Z.A."/>
            <person name="Ito E."/>
            <person name="Goh T."/>
            <person name="Schumacher K."/>
            <person name="Nakano A."/>
            <person name="Ueda T."/>
        </authorList>
    </citation>
    <scope>INTERACTION WITH VPS39</scope>
</reference>
<organism>
    <name type="scientific">Arabidopsis thaliana</name>
    <name type="common">Mouse-ear cress</name>
    <dbReference type="NCBI Taxonomy" id="3702"/>
    <lineage>
        <taxon>Eukaryota</taxon>
        <taxon>Viridiplantae</taxon>
        <taxon>Streptophyta</taxon>
        <taxon>Embryophyta</taxon>
        <taxon>Tracheophyta</taxon>
        <taxon>Spermatophyta</taxon>
        <taxon>Magnoliopsida</taxon>
        <taxon>eudicotyledons</taxon>
        <taxon>Gunneridae</taxon>
        <taxon>Pentapetalae</taxon>
        <taxon>rosids</taxon>
        <taxon>malvids</taxon>
        <taxon>Brassicales</taxon>
        <taxon>Brassicaceae</taxon>
        <taxon>Camelineae</taxon>
        <taxon>Arabidopsis</taxon>
    </lineage>
</organism>
<name>RAG3B_ARATH</name>
<feature type="chain" id="PRO_0000121280" description="Ras-related protein RABG3b">
    <location>
        <begin position="1"/>
        <end position="203"/>
    </location>
</feature>
<feature type="short sequence motif" description="Effector region" evidence="1">
    <location>
        <begin position="37"/>
        <end position="45"/>
    </location>
</feature>
<feature type="binding site" evidence="1">
    <location>
        <begin position="15"/>
        <end position="22"/>
    </location>
    <ligand>
        <name>GTP</name>
        <dbReference type="ChEBI" id="CHEBI:37565"/>
    </ligand>
</feature>
<feature type="binding site" evidence="1">
    <location>
        <begin position="63"/>
        <end position="67"/>
    </location>
    <ligand>
        <name>GTP</name>
        <dbReference type="ChEBI" id="CHEBI:37565"/>
    </ligand>
</feature>
<feature type="binding site" evidence="1">
    <location>
        <begin position="125"/>
        <end position="128"/>
    </location>
    <ligand>
        <name>GTP</name>
        <dbReference type="ChEBI" id="CHEBI:37565"/>
    </ligand>
</feature>
<feature type="binding site" evidence="1">
    <location>
        <begin position="158"/>
        <end position="159"/>
    </location>
    <ligand>
        <name>GTP</name>
        <dbReference type="ChEBI" id="CHEBI:37565"/>
    </ligand>
</feature>
<feature type="modified residue" description="Cysteine methyl ester" evidence="1">
    <location>
        <position position="203"/>
    </location>
</feature>
<feature type="lipid moiety-binding region" description="S-geranylgeranyl cysteine" evidence="1">
    <location>
        <position position="201"/>
    </location>
</feature>
<feature type="lipid moiety-binding region" description="S-geranylgeranyl cysteine" evidence="1">
    <location>
        <position position="203"/>
    </location>
</feature>
<feature type="mutagenesis site" description="Dominant negative (GDP-bound form); inhibits autophagy and tracheary element formation." evidence="2">
    <original>T</original>
    <variation>N</variation>
    <location>
        <position position="22"/>
    </location>
</feature>
<feature type="mutagenesis site" description="Constitutively active (GTP bound form); stimulates autophagy and tracheary element formation." evidence="2">
    <original>Q</original>
    <variation>L</variation>
    <location>
        <position position="67"/>
    </location>
</feature>
<sequence>MSTRRRTLLKVIILGDSGVGKTSLMNQYVNNKFSQQYKATIGADFVTKELQIDDRLVTLQIWDTAGQERFQSLGVAFYRGADCCVLVYDVNHLKSFESLDNWHNEFLTRASPRDPMAFPFILLGNKVDIDGGNSRVVSEKKAREWCAEKGNIVYFETSAKEDYNVDDSFLCITKLALANERDQDIYFQPDTGSVPEQRGGCAC</sequence>
<evidence type="ECO:0000250" key="1"/>
<evidence type="ECO:0000269" key="2">
    <source>
    </source>
</evidence>
<evidence type="ECO:0000269" key="3">
    <source>
    </source>
</evidence>
<evidence type="ECO:0000305" key="4"/>
<evidence type="ECO:0000305" key="5">
    <source>
    </source>
</evidence>
<accession>O04157</accession>
<accession>Q2HIJ2</accession>
<protein>
    <recommendedName>
        <fullName>Ras-related protein RABG3b</fullName>
        <shortName>AtRABG3b</shortName>
    </recommendedName>
    <alternativeName>
        <fullName>Ras-related protein Rab75</fullName>
        <shortName>AtRab75</shortName>
    </alternativeName>
</protein>
<dbReference type="EMBL" id="AB071850">
    <property type="protein sequence ID" value="BAB68375.1"/>
    <property type="molecule type" value="mRNA"/>
</dbReference>
<dbReference type="EMBL" id="Y09821">
    <property type="protein sequence ID" value="CAA70951.1"/>
    <property type="molecule type" value="mRNA"/>
</dbReference>
<dbReference type="EMBL" id="Y12227">
    <property type="protein sequence ID" value="CAA72904.1"/>
    <property type="molecule type" value="Genomic_DNA"/>
</dbReference>
<dbReference type="EMBL" id="AC003979">
    <property type="protein sequence ID" value="AAC25512.1"/>
    <property type="molecule type" value="Genomic_DNA"/>
</dbReference>
<dbReference type="EMBL" id="CP002684">
    <property type="protein sequence ID" value="AEE30279.1"/>
    <property type="molecule type" value="Genomic_DNA"/>
</dbReference>
<dbReference type="EMBL" id="BT024589">
    <property type="protein sequence ID" value="ABD42987.1"/>
    <property type="molecule type" value="mRNA"/>
</dbReference>
<dbReference type="PIR" id="T00770">
    <property type="entry name" value="T00770"/>
</dbReference>
<dbReference type="RefSeq" id="NP_173688.1">
    <property type="nucleotide sequence ID" value="NM_102121.3"/>
</dbReference>
<dbReference type="SMR" id="O04157"/>
<dbReference type="FunCoup" id="O04157">
    <property type="interactions" value="3304"/>
</dbReference>
<dbReference type="STRING" id="3702.O04157"/>
<dbReference type="PaxDb" id="3702-AT1G22740.1"/>
<dbReference type="ProteomicsDB" id="236341"/>
<dbReference type="EnsemblPlants" id="AT1G22740.1">
    <property type="protein sequence ID" value="AT1G22740.1"/>
    <property type="gene ID" value="AT1G22740"/>
</dbReference>
<dbReference type="GeneID" id="838880"/>
<dbReference type="Gramene" id="AT1G22740.1">
    <property type="protein sequence ID" value="AT1G22740.1"/>
    <property type="gene ID" value="AT1G22740"/>
</dbReference>
<dbReference type="KEGG" id="ath:AT1G22740"/>
<dbReference type="Araport" id="AT1G22740"/>
<dbReference type="TAIR" id="AT1G22740">
    <property type="gene designation" value="RABG3B"/>
</dbReference>
<dbReference type="eggNOG" id="KOG0394">
    <property type="taxonomic scope" value="Eukaryota"/>
</dbReference>
<dbReference type="HOGENOM" id="CLU_041217_10_6_1"/>
<dbReference type="InParanoid" id="O04157"/>
<dbReference type="OMA" id="AREWCAE"/>
<dbReference type="OrthoDB" id="1436450at2759"/>
<dbReference type="PhylomeDB" id="O04157"/>
<dbReference type="PRO" id="PR:O04157"/>
<dbReference type="Proteomes" id="UP000006548">
    <property type="component" value="Chromosome 1"/>
</dbReference>
<dbReference type="ExpressionAtlas" id="O04157">
    <property type="expression patterns" value="baseline and differential"/>
</dbReference>
<dbReference type="GO" id="GO:0005634">
    <property type="term" value="C:nucleus"/>
    <property type="evidence" value="ECO:0007005"/>
    <property type="project" value="TAIR"/>
</dbReference>
<dbReference type="GO" id="GO:0000325">
    <property type="term" value="C:plant-type vacuole"/>
    <property type="evidence" value="ECO:0007005"/>
    <property type="project" value="TAIR"/>
</dbReference>
<dbReference type="GO" id="GO:0005886">
    <property type="term" value="C:plasma membrane"/>
    <property type="evidence" value="ECO:0007669"/>
    <property type="project" value="UniProtKB-SubCell"/>
</dbReference>
<dbReference type="GO" id="GO:0005525">
    <property type="term" value="F:GTP binding"/>
    <property type="evidence" value="ECO:0000250"/>
    <property type="project" value="TAIR"/>
</dbReference>
<dbReference type="GO" id="GO:0003924">
    <property type="term" value="F:GTPase activity"/>
    <property type="evidence" value="ECO:0007669"/>
    <property type="project" value="InterPro"/>
</dbReference>
<dbReference type="GO" id="GO:0010508">
    <property type="term" value="P:positive regulation of autophagy"/>
    <property type="evidence" value="ECO:0000315"/>
    <property type="project" value="UniProtKB"/>
</dbReference>
<dbReference type="GO" id="GO:0010623">
    <property type="term" value="P:programmed cell death involved in cell development"/>
    <property type="evidence" value="ECO:0000315"/>
    <property type="project" value="TAIR"/>
</dbReference>
<dbReference type="GO" id="GO:0015031">
    <property type="term" value="P:protein transport"/>
    <property type="evidence" value="ECO:0007669"/>
    <property type="project" value="UniProtKB-KW"/>
</dbReference>
<dbReference type="GO" id="GO:1905177">
    <property type="term" value="P:tracheary element differentiation"/>
    <property type="evidence" value="ECO:0000315"/>
    <property type="project" value="TAIR"/>
</dbReference>
<dbReference type="GO" id="GO:0010089">
    <property type="term" value="P:xylem development"/>
    <property type="evidence" value="ECO:0000315"/>
    <property type="project" value="UniProtKB"/>
</dbReference>
<dbReference type="CDD" id="cd01862">
    <property type="entry name" value="Rab7"/>
    <property type="match status" value="1"/>
</dbReference>
<dbReference type="FunFam" id="3.40.50.300:FF:000295">
    <property type="entry name" value="Ras-related protein Rab7"/>
    <property type="match status" value="1"/>
</dbReference>
<dbReference type="Gene3D" id="3.40.50.300">
    <property type="entry name" value="P-loop containing nucleotide triphosphate hydrolases"/>
    <property type="match status" value="1"/>
</dbReference>
<dbReference type="InterPro" id="IPR027417">
    <property type="entry name" value="P-loop_NTPase"/>
</dbReference>
<dbReference type="InterPro" id="IPR005225">
    <property type="entry name" value="Small_GTP-bd"/>
</dbReference>
<dbReference type="InterPro" id="IPR001806">
    <property type="entry name" value="Small_GTPase"/>
</dbReference>
<dbReference type="NCBIfam" id="TIGR00231">
    <property type="entry name" value="small_GTP"/>
    <property type="match status" value="1"/>
</dbReference>
<dbReference type="PANTHER" id="PTHR47981">
    <property type="entry name" value="RAB FAMILY"/>
    <property type="match status" value="1"/>
</dbReference>
<dbReference type="PANTHER" id="PTHR47981:SF2">
    <property type="entry name" value="RAS-RELATED PROTEIN RABG3B"/>
    <property type="match status" value="1"/>
</dbReference>
<dbReference type="Pfam" id="PF00071">
    <property type="entry name" value="Ras"/>
    <property type="match status" value="1"/>
</dbReference>
<dbReference type="PRINTS" id="PR00449">
    <property type="entry name" value="RASTRNSFRMNG"/>
</dbReference>
<dbReference type="SMART" id="SM00175">
    <property type="entry name" value="RAB"/>
    <property type="match status" value="1"/>
</dbReference>
<dbReference type="SMART" id="SM00176">
    <property type="entry name" value="RAN"/>
    <property type="match status" value="1"/>
</dbReference>
<dbReference type="SMART" id="SM00173">
    <property type="entry name" value="RAS"/>
    <property type="match status" value="1"/>
</dbReference>
<dbReference type="SMART" id="SM00174">
    <property type="entry name" value="RHO"/>
    <property type="match status" value="1"/>
</dbReference>
<dbReference type="SUPFAM" id="SSF52540">
    <property type="entry name" value="P-loop containing nucleoside triphosphate hydrolases"/>
    <property type="match status" value="1"/>
</dbReference>
<dbReference type="PROSITE" id="PS51419">
    <property type="entry name" value="RAB"/>
    <property type="match status" value="1"/>
</dbReference>
<keyword id="KW-1003">Cell membrane</keyword>
<keyword id="KW-0342">GTP-binding</keyword>
<keyword id="KW-0449">Lipoprotein</keyword>
<keyword id="KW-0472">Membrane</keyword>
<keyword id="KW-0488">Methylation</keyword>
<keyword id="KW-0547">Nucleotide-binding</keyword>
<keyword id="KW-0636">Prenylation</keyword>
<keyword id="KW-0653">Protein transport</keyword>
<keyword id="KW-1185">Reference proteome</keyword>
<keyword id="KW-0813">Transport</keyword>
<gene>
    <name type="primary">RABG3B</name>
    <name type="synonym">RAB7</name>
    <name type="synonym">RAB75</name>
    <name type="ordered locus">At1g22740</name>
    <name type="ORF">T22J18.9</name>
</gene>
<comment type="function">
    <text evidence="2">Intracellular vesicle trafficking and protein transport. Functions in autophagy. Involved in xylem and tracheary element differentiation.</text>
</comment>
<comment type="subunit">
    <text evidence="3">Interacts with VPS39.</text>
</comment>
<comment type="subcellular location">
    <subcellularLocation>
        <location evidence="4">Cell membrane</location>
        <topology evidence="4">Lipid-anchor</topology>
        <orientation evidence="4">Cytoplasmic side</orientation>
    </subcellularLocation>
</comment>
<comment type="tissue specificity">
    <text evidence="2">Expressed in xylem cells of inflorescence stems.</text>
</comment>
<comment type="miscellaneous">
    <text evidence="5">Plants silencing RABG3B display a significant decrease in the number of both protoxylem and metaxylem cells in the basal region of inflorescence stems.</text>
</comment>
<comment type="similarity">
    <text evidence="4">Belongs to the small GTPase superfamily. Rab family.</text>
</comment>
<proteinExistence type="evidence at protein level"/>